<gene>
    <name evidence="2" type="primary">infB</name>
    <name type="ordered locus">SRU_1777</name>
</gene>
<comment type="function">
    <text evidence="2">One of the essential components for the initiation of protein synthesis. Protects formylmethionyl-tRNA from spontaneous hydrolysis and promotes its binding to the 30S ribosomal subunits. Also involved in the hydrolysis of GTP during the formation of the 70S ribosomal complex.</text>
</comment>
<comment type="subcellular location">
    <subcellularLocation>
        <location evidence="2">Cytoplasm</location>
    </subcellularLocation>
</comment>
<comment type="similarity">
    <text evidence="2">Belongs to the TRAFAC class translation factor GTPase superfamily. Classic translation factor GTPase family. IF-2 subfamily.</text>
</comment>
<sequence length="1029" mass="112063">MATKTKDFQEKKLFQVVRELNVSEDRVVEFLEEEGYEEALSGSGLNAKIVDEEAYLVLREEYADDAEVAARIRELRSEEDDGGPERDEVATLDEEQAAEPESATETAEEAAEPAVADDEEEPRASGDAAPEAAPAEEDTSDATAPADAEAEPSGDEASAEASADDAPADEAPTDEAETAPVDAADKDAAAIADEQKQAAQEPDAEADASGQDTGEETSDTDAATEADATDDAEAESAAPEPTEAEPETPADETEAEDVSADKETASAEEADDHASDEHAPDEDAEAPEEPTEAEGEADDTTEEETPAEGADDAADDEADEEGETLKAGRYRLKGPSVVGKMDSDQLQRPDRKRKRKDKDKDKDKSSKKDKKDKSNKKSKSKGKKQKGGGGGGPDEEDIEQTLQETLQELEQGASRERQRRRRRRRKRHEEERQRRRERKREQENILEVTEFVTTGELANLIGEPVSDVIDTLFDAGMMVSINQRLDTETIEFVADEYGYEVEFVAERDTQAVEVEEDDPEDLEPRAPVVTVMGHVDHGKTSLLDYVRNANVVAGEEGGITQHVGAHYVELTDHDNEAIAFLDTPGHEAFTAMRARGAKATDIVILVVAADDSVMPRTKEAINHAQAADVPIVVAINKMDKREADAEKVRAELADQNVLVEEYGGDVQSAEVSAKTGDGINELLDKVLLQSEIMELKANPNREASGVIIESRLEKGRGNVITVLVQNGTLETGDPFLAGIHSGSVRAMFNERDNRIESVGPSQPALVLGCDGSPEVGDQFVVMDSEGEARDVAQERQRIHREQELRRQSQVSLDQVSRQMAEGEFHELNLIIKADVGGSVEALSDALLKLKTDEVAVNVIHSGVGAITESDVMLARASDAIILGFQVRPTSGAREASQREEVDIRTYSVIYAAIEDVRDALEGLLSPERREETKGRAEVRDTFSVPDVGMVAGCYVNEGTVGRNQKVRLVRDGVVQYEGEISSLKRFEEDVSEVQSGYECGLSIENFDDLKVGDELETYVIVEEARELEV</sequence>
<keyword id="KW-0963">Cytoplasm</keyword>
<keyword id="KW-0342">GTP-binding</keyword>
<keyword id="KW-0396">Initiation factor</keyword>
<keyword id="KW-0547">Nucleotide-binding</keyword>
<keyword id="KW-0648">Protein biosynthesis</keyword>
<keyword id="KW-1185">Reference proteome</keyword>
<name>IF2_SALRD</name>
<proteinExistence type="inferred from homology"/>
<feature type="chain" id="PRO_0000335509" description="Translation initiation factor IF-2">
    <location>
        <begin position="1"/>
        <end position="1029"/>
    </location>
</feature>
<feature type="domain" description="tr-type G">
    <location>
        <begin position="524"/>
        <end position="696"/>
    </location>
</feature>
<feature type="region of interest" description="Disordered" evidence="3">
    <location>
        <begin position="73"/>
        <end position="441"/>
    </location>
</feature>
<feature type="region of interest" description="G1" evidence="1">
    <location>
        <begin position="533"/>
        <end position="540"/>
    </location>
</feature>
<feature type="region of interest" description="G2" evidence="1">
    <location>
        <begin position="558"/>
        <end position="562"/>
    </location>
</feature>
<feature type="region of interest" description="G3" evidence="1">
    <location>
        <begin position="582"/>
        <end position="585"/>
    </location>
</feature>
<feature type="region of interest" description="G4" evidence="1">
    <location>
        <begin position="636"/>
        <end position="639"/>
    </location>
</feature>
<feature type="region of interest" description="G5" evidence="1">
    <location>
        <begin position="672"/>
        <end position="674"/>
    </location>
</feature>
<feature type="compositionally biased region" description="Acidic residues" evidence="3">
    <location>
        <begin position="106"/>
        <end position="121"/>
    </location>
</feature>
<feature type="compositionally biased region" description="Acidic residues" evidence="3">
    <location>
        <begin position="148"/>
        <end position="177"/>
    </location>
</feature>
<feature type="compositionally biased region" description="Basic and acidic residues" evidence="3">
    <location>
        <begin position="183"/>
        <end position="196"/>
    </location>
</feature>
<feature type="compositionally biased region" description="Acidic residues" evidence="3">
    <location>
        <begin position="213"/>
        <end position="234"/>
    </location>
</feature>
<feature type="compositionally biased region" description="Acidic residues" evidence="3">
    <location>
        <begin position="242"/>
        <end position="258"/>
    </location>
</feature>
<feature type="compositionally biased region" description="Acidic residues" evidence="3">
    <location>
        <begin position="279"/>
        <end position="322"/>
    </location>
</feature>
<feature type="compositionally biased region" description="Basic and acidic residues" evidence="3">
    <location>
        <begin position="358"/>
        <end position="372"/>
    </location>
</feature>
<feature type="compositionally biased region" description="Basic residues" evidence="3">
    <location>
        <begin position="373"/>
        <end position="386"/>
    </location>
</feature>
<feature type="compositionally biased region" description="Low complexity" evidence="3">
    <location>
        <begin position="400"/>
        <end position="411"/>
    </location>
</feature>
<feature type="compositionally biased region" description="Basic residues" evidence="3">
    <location>
        <begin position="417"/>
        <end position="427"/>
    </location>
</feature>
<feature type="compositionally biased region" description="Basic and acidic residues" evidence="3">
    <location>
        <begin position="428"/>
        <end position="441"/>
    </location>
</feature>
<feature type="binding site" evidence="2">
    <location>
        <begin position="533"/>
        <end position="540"/>
    </location>
    <ligand>
        <name>GTP</name>
        <dbReference type="ChEBI" id="CHEBI:37565"/>
    </ligand>
</feature>
<feature type="binding site" evidence="2">
    <location>
        <begin position="582"/>
        <end position="586"/>
    </location>
    <ligand>
        <name>GTP</name>
        <dbReference type="ChEBI" id="CHEBI:37565"/>
    </ligand>
</feature>
<feature type="binding site" evidence="2">
    <location>
        <begin position="636"/>
        <end position="639"/>
    </location>
    <ligand>
        <name>GTP</name>
        <dbReference type="ChEBI" id="CHEBI:37565"/>
    </ligand>
</feature>
<dbReference type="EMBL" id="CP000159">
    <property type="protein sequence ID" value="ABC44821.1"/>
    <property type="molecule type" value="Genomic_DNA"/>
</dbReference>
<dbReference type="RefSeq" id="WP_011404519.1">
    <property type="nucleotide sequence ID" value="NC_007677.1"/>
</dbReference>
<dbReference type="RefSeq" id="YP_445894.1">
    <property type="nucleotide sequence ID" value="NC_007677.1"/>
</dbReference>
<dbReference type="SMR" id="Q2S1N7"/>
<dbReference type="STRING" id="309807.SRU_1777"/>
<dbReference type="EnsemblBacteria" id="ABC44821">
    <property type="protein sequence ID" value="ABC44821"/>
    <property type="gene ID" value="SRU_1777"/>
</dbReference>
<dbReference type="KEGG" id="sru:SRU_1777"/>
<dbReference type="PATRIC" id="fig|309807.25.peg.1845"/>
<dbReference type="eggNOG" id="COG0532">
    <property type="taxonomic scope" value="Bacteria"/>
</dbReference>
<dbReference type="eggNOG" id="COG3064">
    <property type="taxonomic scope" value="Bacteria"/>
</dbReference>
<dbReference type="HOGENOM" id="CLU_006301_0_1_10"/>
<dbReference type="OrthoDB" id="9811804at2"/>
<dbReference type="Proteomes" id="UP000008674">
    <property type="component" value="Chromosome"/>
</dbReference>
<dbReference type="GO" id="GO:0005737">
    <property type="term" value="C:cytoplasm"/>
    <property type="evidence" value="ECO:0007669"/>
    <property type="project" value="UniProtKB-SubCell"/>
</dbReference>
<dbReference type="GO" id="GO:0005525">
    <property type="term" value="F:GTP binding"/>
    <property type="evidence" value="ECO:0007669"/>
    <property type="project" value="UniProtKB-KW"/>
</dbReference>
<dbReference type="GO" id="GO:0003924">
    <property type="term" value="F:GTPase activity"/>
    <property type="evidence" value="ECO:0007669"/>
    <property type="project" value="UniProtKB-UniRule"/>
</dbReference>
<dbReference type="GO" id="GO:0003743">
    <property type="term" value="F:translation initiation factor activity"/>
    <property type="evidence" value="ECO:0007669"/>
    <property type="project" value="UniProtKB-UniRule"/>
</dbReference>
<dbReference type="CDD" id="cd01887">
    <property type="entry name" value="IF2_eIF5B"/>
    <property type="match status" value="1"/>
</dbReference>
<dbReference type="CDD" id="cd03702">
    <property type="entry name" value="IF2_mtIF2_II"/>
    <property type="match status" value="1"/>
</dbReference>
<dbReference type="CDD" id="cd03692">
    <property type="entry name" value="mtIF2_IVc"/>
    <property type="match status" value="1"/>
</dbReference>
<dbReference type="FunFam" id="2.40.30.10:FF:000008">
    <property type="entry name" value="Translation initiation factor IF-2"/>
    <property type="match status" value="1"/>
</dbReference>
<dbReference type="FunFam" id="2.40.30.10:FF:000054">
    <property type="entry name" value="Translation initiation factor IF-2"/>
    <property type="match status" value="1"/>
</dbReference>
<dbReference type="FunFam" id="3.40.50.10050:FF:000001">
    <property type="entry name" value="Translation initiation factor IF-2"/>
    <property type="match status" value="1"/>
</dbReference>
<dbReference type="FunFam" id="3.40.50.300:FF:000019">
    <property type="entry name" value="Translation initiation factor IF-2"/>
    <property type="match status" value="1"/>
</dbReference>
<dbReference type="Gene3D" id="3.40.50.300">
    <property type="entry name" value="P-loop containing nucleotide triphosphate hydrolases"/>
    <property type="match status" value="1"/>
</dbReference>
<dbReference type="Gene3D" id="2.40.30.10">
    <property type="entry name" value="Translation factors"/>
    <property type="match status" value="2"/>
</dbReference>
<dbReference type="Gene3D" id="3.40.50.10050">
    <property type="entry name" value="Translation initiation factor IF- 2, domain 3"/>
    <property type="match status" value="1"/>
</dbReference>
<dbReference type="HAMAP" id="MF_00100_B">
    <property type="entry name" value="IF_2_B"/>
    <property type="match status" value="1"/>
</dbReference>
<dbReference type="InterPro" id="IPR053905">
    <property type="entry name" value="EF-G-like_DII"/>
</dbReference>
<dbReference type="InterPro" id="IPR004161">
    <property type="entry name" value="EFTu-like_2"/>
</dbReference>
<dbReference type="InterPro" id="IPR044145">
    <property type="entry name" value="IF2_II"/>
</dbReference>
<dbReference type="InterPro" id="IPR006847">
    <property type="entry name" value="IF2_N"/>
</dbReference>
<dbReference type="InterPro" id="IPR027417">
    <property type="entry name" value="P-loop_NTPase"/>
</dbReference>
<dbReference type="InterPro" id="IPR005225">
    <property type="entry name" value="Small_GTP-bd"/>
</dbReference>
<dbReference type="InterPro" id="IPR000795">
    <property type="entry name" value="T_Tr_GTP-bd_dom"/>
</dbReference>
<dbReference type="InterPro" id="IPR000178">
    <property type="entry name" value="TF_IF2_bacterial-like"/>
</dbReference>
<dbReference type="InterPro" id="IPR015760">
    <property type="entry name" value="TIF_IF2"/>
</dbReference>
<dbReference type="InterPro" id="IPR023115">
    <property type="entry name" value="TIF_IF2_dom3"/>
</dbReference>
<dbReference type="InterPro" id="IPR036925">
    <property type="entry name" value="TIF_IF2_dom3_sf"/>
</dbReference>
<dbReference type="InterPro" id="IPR009000">
    <property type="entry name" value="Transl_B-barrel_sf"/>
</dbReference>
<dbReference type="NCBIfam" id="TIGR00487">
    <property type="entry name" value="IF-2"/>
    <property type="match status" value="1"/>
</dbReference>
<dbReference type="NCBIfam" id="TIGR00231">
    <property type="entry name" value="small_GTP"/>
    <property type="match status" value="1"/>
</dbReference>
<dbReference type="PANTHER" id="PTHR43381:SF5">
    <property type="entry name" value="TR-TYPE G DOMAIN-CONTAINING PROTEIN"/>
    <property type="match status" value="1"/>
</dbReference>
<dbReference type="PANTHER" id="PTHR43381">
    <property type="entry name" value="TRANSLATION INITIATION FACTOR IF-2-RELATED"/>
    <property type="match status" value="1"/>
</dbReference>
<dbReference type="Pfam" id="PF22042">
    <property type="entry name" value="EF-G_D2"/>
    <property type="match status" value="1"/>
</dbReference>
<dbReference type="Pfam" id="PF00009">
    <property type="entry name" value="GTP_EFTU"/>
    <property type="match status" value="1"/>
</dbReference>
<dbReference type="Pfam" id="PF03144">
    <property type="entry name" value="GTP_EFTU_D2"/>
    <property type="match status" value="1"/>
</dbReference>
<dbReference type="Pfam" id="PF11987">
    <property type="entry name" value="IF-2"/>
    <property type="match status" value="1"/>
</dbReference>
<dbReference type="Pfam" id="PF04760">
    <property type="entry name" value="IF2_N"/>
    <property type="match status" value="1"/>
</dbReference>
<dbReference type="PRINTS" id="PR00315">
    <property type="entry name" value="ELONGATNFCT"/>
</dbReference>
<dbReference type="SUPFAM" id="SSF52156">
    <property type="entry name" value="Initiation factor IF2/eIF5b, domain 3"/>
    <property type="match status" value="1"/>
</dbReference>
<dbReference type="SUPFAM" id="SSF52540">
    <property type="entry name" value="P-loop containing nucleoside triphosphate hydrolases"/>
    <property type="match status" value="1"/>
</dbReference>
<dbReference type="SUPFAM" id="SSF50447">
    <property type="entry name" value="Translation proteins"/>
    <property type="match status" value="2"/>
</dbReference>
<dbReference type="PROSITE" id="PS51722">
    <property type="entry name" value="G_TR_2"/>
    <property type="match status" value="1"/>
</dbReference>
<evidence type="ECO:0000250" key="1"/>
<evidence type="ECO:0000255" key="2">
    <source>
        <dbReference type="HAMAP-Rule" id="MF_00100"/>
    </source>
</evidence>
<evidence type="ECO:0000256" key="3">
    <source>
        <dbReference type="SAM" id="MobiDB-lite"/>
    </source>
</evidence>
<reference key="1">
    <citation type="journal article" date="2005" name="Proc. Natl. Acad. Sci. U.S.A.">
        <title>The genome of Salinibacter ruber: convergence and gene exchange among hyperhalophilic bacteria and archaea.</title>
        <authorList>
            <person name="Mongodin E.F."/>
            <person name="Nelson K.E."/>
            <person name="Daugherty S."/>
            <person name="DeBoy R.T."/>
            <person name="Wister J."/>
            <person name="Khouri H."/>
            <person name="Weidman J."/>
            <person name="Walsh D.A."/>
            <person name="Papke R.T."/>
            <person name="Sanchez Perez G."/>
            <person name="Sharma A.K."/>
            <person name="Nesbo C.L."/>
            <person name="MacLeod D."/>
            <person name="Bapteste E."/>
            <person name="Doolittle W.F."/>
            <person name="Charlebois R.L."/>
            <person name="Legault B."/>
            <person name="Rodriguez-Valera F."/>
        </authorList>
    </citation>
    <scope>NUCLEOTIDE SEQUENCE [LARGE SCALE GENOMIC DNA]</scope>
    <source>
        <strain>DSM 13855 / CECT 5946 / M31</strain>
    </source>
</reference>
<accession>Q2S1N7</accession>
<protein>
    <recommendedName>
        <fullName evidence="2">Translation initiation factor IF-2</fullName>
    </recommendedName>
</protein>
<organism>
    <name type="scientific">Salinibacter ruber (strain DSM 13855 / M31)</name>
    <dbReference type="NCBI Taxonomy" id="309807"/>
    <lineage>
        <taxon>Bacteria</taxon>
        <taxon>Pseudomonadati</taxon>
        <taxon>Rhodothermota</taxon>
        <taxon>Rhodothermia</taxon>
        <taxon>Rhodothermales</taxon>
        <taxon>Salinibacteraceae</taxon>
        <taxon>Salinibacter</taxon>
    </lineage>
</organism>